<proteinExistence type="evidence at protein level"/>
<accession>Q9LVM1</accession>
<accession>Q9LF78</accession>
<sequence>MSRGSRFVRAPGLLLCRVNLQPQPKIPSFSYSLRSDYRLHNGFSNYIRRNSIRTSPVINAFLSDNSPSPSPSPSPIRFVQRSSMLNGRLFSTSTPNPDQTTTKTKEIKTTSSDSDSAMADMKILRTLAGYLWMRDNPEFRFRVIAALGFLVGAKVLNVQVPFLFKLAVDWLASATGTGASLTTFAATNPTLLTVFATPAAVLIGYGIARTGSSAFNELRTAVFSKVALRTIRSVSRKVFSHLHDLDLRYHLSRETGGLNRIIDRGSRAINFILSAMVFNVVPTILEISMVSGILAYKFGAAFAWITSLSVGSYIVFTLAVTQWRTKFRKAMNKADNDASTRAIDSLINYETVKYFNNEGYEAEKYDQFLKKYEDAALQTQRSLAFLNFGQSIIFSTALSTAMVLCSQGIMNGQMTVGDLVMVNGLLFQLSLPLNFLGSVYRETIQSLVDMKSMFQLLEEKSDITNTSDAKPLVLKGGNIEFENVHFSYLPERKILDGISFVVPAGKSVAIVGTSGSGKSTILRMLFRFFDTDSGNIRIDGQDIKEVRLDSLRSSIGVVPQDTVLFNDTIFHNIHYGRLSATEEEVYEAARRAAIHETISNFPDKYSTIVGERGLKLSGGEKQRVALARTFLKSPAILLCDEATSALDSTTEAEILNALKALASNRTSIFIAHRLTTAMQCDEIVVLENGKVVEQGPHDELLGKSGRYAQLWTQQNSSVDMLDAAIKLE</sequence>
<evidence type="ECO:0000250" key="1"/>
<evidence type="ECO:0000255" key="2"/>
<evidence type="ECO:0000255" key="3">
    <source>
        <dbReference type="PROSITE-ProRule" id="PRU00434"/>
    </source>
</evidence>
<evidence type="ECO:0000255" key="4">
    <source>
        <dbReference type="PROSITE-ProRule" id="PRU00441"/>
    </source>
</evidence>
<evidence type="ECO:0000256" key="5">
    <source>
        <dbReference type="SAM" id="MobiDB-lite"/>
    </source>
</evidence>
<evidence type="ECO:0000269" key="6">
    <source>
    </source>
</evidence>
<evidence type="ECO:0000269" key="7">
    <source>
    </source>
</evidence>
<evidence type="ECO:0000269" key="8">
    <source>
    </source>
</evidence>
<evidence type="ECO:0000269" key="9">
    <source>
    </source>
</evidence>
<evidence type="ECO:0000269" key="10">
    <source>
    </source>
</evidence>
<evidence type="ECO:0000269" key="11">
    <source>
    </source>
</evidence>
<evidence type="ECO:0000305" key="12"/>
<evidence type="ECO:0007829" key="13">
    <source>
        <dbReference type="PDB" id="7N58"/>
    </source>
</evidence>
<organism>
    <name type="scientific">Arabidopsis thaliana</name>
    <name type="common">Mouse-ear cress</name>
    <dbReference type="NCBI Taxonomy" id="3702"/>
    <lineage>
        <taxon>Eukaryota</taxon>
        <taxon>Viridiplantae</taxon>
        <taxon>Streptophyta</taxon>
        <taxon>Embryophyta</taxon>
        <taxon>Tracheophyta</taxon>
        <taxon>Spermatophyta</taxon>
        <taxon>Magnoliopsida</taxon>
        <taxon>eudicotyledons</taxon>
        <taxon>Gunneridae</taxon>
        <taxon>Pentapetalae</taxon>
        <taxon>rosids</taxon>
        <taxon>malvids</taxon>
        <taxon>Brassicales</taxon>
        <taxon>Brassicaceae</taxon>
        <taxon>Camelineae</taxon>
        <taxon>Arabidopsis</taxon>
    </lineage>
</organism>
<comment type="function">
    <text evidence="6 8 9 10 11">Performs an essential function in the generation of cytoplasmic iron-sulfur proteins by mediating export of Fe/S cluster precursors synthesized by NFS1 and other mitochondrial proteins. Not required for mitochondrial and plastid Fe-S enzymes. Probably involved in the export of cyclic pyranopterin monophosphate (cPMP) from mitochondria into the cytosol. Mediates glutathione-dependent resistance to heavy metals such as cadmium and lead, as well as their transport from roots to leaves. Regulates nonprotein thiols (NPSH) and the cellular level of glutathione (GSH).</text>
</comment>
<comment type="pathway">
    <text>Cofactor biosynthesis; molybdopterin biosynthesis.</text>
</comment>
<comment type="subunit">
    <text evidence="1">Homodimer.</text>
</comment>
<comment type="subcellular location">
    <subcellularLocation>
        <location evidence="6 7 9">Mitochondrion inner membrane</location>
        <topology evidence="4 6 7 9">Multi-pass membrane protein</topology>
    </subcellularLocation>
</comment>
<comment type="tissue specificity">
    <text evidence="9">Expressed at high levels in roots, leaves, stems, flowers and siliques.</text>
</comment>
<comment type="induction">
    <text evidence="8">In roots by cadmium and lead.</text>
</comment>
<comment type="disruption phenotype">
    <text evidence="6 8 10 11">Plants exhibit an enhanced sensitivity to cadmium, dwarfism and chlorosis, with an altered morphology of leaf and cell nuclei. Mitochondria accumulate nonheme, nonprotein iron. Decreased levels of molybdenum cofactor (MOCO) and reduced activities of cytosolic Fe-S proteins. Reduced ability to produce abscisic acid under normal conditions and in response to drought stress. Male sterility when homozygous.</text>
</comment>
<comment type="similarity">
    <text evidence="12">Belongs to the ABC transporter superfamily. ABCB family. Heavy Metal importer (TC 3.A.1.210) subfamily.</text>
</comment>
<name>AB25B_ARATH</name>
<feature type="transit peptide" description="Mitochondrion" evidence="2">
    <location>
        <begin position="1"/>
        <end position="97"/>
    </location>
</feature>
<feature type="chain" id="PRO_0000379134" description="ABC transporter B family member 25, mitochondrial">
    <location>
        <begin position="98"/>
        <end position="728"/>
    </location>
</feature>
<feature type="transmembrane region" description="Helical" evidence="4">
    <location>
        <begin position="144"/>
        <end position="164"/>
    </location>
</feature>
<feature type="transmembrane region" description="Helical" evidence="4">
    <location>
        <begin position="166"/>
        <end position="186"/>
    </location>
</feature>
<feature type="transmembrane region" description="Helical" evidence="4">
    <location>
        <begin position="188"/>
        <end position="208"/>
    </location>
</feature>
<feature type="transmembrane region" description="Helical" evidence="4">
    <location>
        <begin position="275"/>
        <end position="295"/>
    </location>
</feature>
<feature type="transmembrane region" description="Helical" evidence="4">
    <location>
        <begin position="300"/>
        <end position="320"/>
    </location>
</feature>
<feature type="transmembrane region" description="Helical" evidence="4">
    <location>
        <begin position="383"/>
        <end position="403"/>
    </location>
</feature>
<feature type="transmembrane region" description="Helical" evidence="4">
    <location>
        <begin position="419"/>
        <end position="439"/>
    </location>
</feature>
<feature type="domain" description="ABC transmembrane type-1" evidence="4">
    <location>
        <begin position="143"/>
        <end position="445"/>
    </location>
</feature>
<feature type="domain" description="ABC transporter" evidence="3">
    <location>
        <begin position="479"/>
        <end position="713"/>
    </location>
</feature>
<feature type="region of interest" description="Disordered" evidence="5">
    <location>
        <begin position="89"/>
        <end position="113"/>
    </location>
</feature>
<feature type="binding site" evidence="1">
    <location>
        <position position="488"/>
    </location>
    <ligand>
        <name>ATP</name>
        <dbReference type="ChEBI" id="CHEBI:30616"/>
    </ligand>
</feature>
<feature type="binding site" evidence="3">
    <location>
        <begin position="512"/>
        <end position="523"/>
    </location>
    <ligand>
        <name>ATP</name>
        <dbReference type="ChEBI" id="CHEBI:30616"/>
    </ligand>
</feature>
<feature type="mutagenesis site" description="Resistant to sirtinol and reduced chlorophyll content." evidence="10">
    <original>R</original>
    <variation>K</variation>
    <location>
        <position position="612"/>
    </location>
</feature>
<feature type="sequence conflict" description="In Ref. 1; CAB97048." evidence="12" ref="1">
    <original>R</original>
    <variation>S</variation>
    <location>
        <position position="328"/>
    </location>
</feature>
<feature type="sequence conflict" description="In Ref. 1; CAB97048." evidence="12" ref="1">
    <original>A</original>
    <variation>D</variation>
    <location>
        <position position="338"/>
    </location>
</feature>
<feature type="helix" evidence="13">
    <location>
        <begin position="118"/>
        <end position="131"/>
    </location>
</feature>
<feature type="helix" evidence="13">
    <location>
        <begin position="137"/>
        <end position="168"/>
    </location>
</feature>
<feature type="turn" evidence="13">
    <location>
        <begin position="169"/>
        <end position="175"/>
    </location>
</feature>
<feature type="helix" evidence="13">
    <location>
        <begin position="180"/>
        <end position="182"/>
    </location>
</feature>
<feature type="helix" evidence="13">
    <location>
        <begin position="198"/>
        <end position="244"/>
    </location>
</feature>
<feature type="helix" evidence="13">
    <location>
        <begin position="247"/>
        <end position="252"/>
    </location>
</feature>
<feature type="helix" evidence="13">
    <location>
        <begin position="255"/>
        <end position="278"/>
    </location>
</feature>
<feature type="helix" evidence="13">
    <location>
        <begin position="280"/>
        <end position="291"/>
    </location>
</feature>
<feature type="helix" evidence="13">
    <location>
        <begin position="292"/>
        <end position="295"/>
    </location>
</feature>
<feature type="helix" evidence="13">
    <location>
        <begin position="300"/>
        <end position="347"/>
    </location>
</feature>
<feature type="helix" evidence="13">
    <location>
        <begin position="349"/>
        <end position="354"/>
    </location>
</feature>
<feature type="helix" evidence="13">
    <location>
        <begin position="361"/>
        <end position="410"/>
    </location>
</feature>
<feature type="helix" evidence="13">
    <location>
        <begin position="419"/>
        <end position="430"/>
    </location>
</feature>
<feature type="helix" evidence="13">
    <location>
        <begin position="433"/>
        <end position="437"/>
    </location>
</feature>
<feature type="helix" evidence="13">
    <location>
        <begin position="439"/>
        <end position="456"/>
    </location>
</feature>
<feature type="strand" evidence="13">
    <location>
        <begin position="479"/>
        <end position="486"/>
    </location>
</feature>
<feature type="strand" evidence="13">
    <location>
        <begin position="488"/>
        <end position="491"/>
    </location>
</feature>
<feature type="strand" evidence="13">
    <location>
        <begin position="494"/>
        <end position="498"/>
    </location>
</feature>
<feature type="strand" evidence="13">
    <location>
        <begin position="507"/>
        <end position="512"/>
    </location>
</feature>
<feature type="helix" evidence="13">
    <location>
        <begin position="520"/>
        <end position="525"/>
    </location>
</feature>
<feature type="strand" evidence="13">
    <location>
        <begin position="535"/>
        <end position="540"/>
    </location>
</feature>
<feature type="turn" evidence="13">
    <location>
        <begin position="543"/>
        <end position="545"/>
    </location>
</feature>
<feature type="helix" evidence="13">
    <location>
        <begin position="548"/>
        <end position="554"/>
    </location>
</feature>
<feature type="strand" evidence="13">
    <location>
        <begin position="566"/>
        <end position="568"/>
    </location>
</feature>
<feature type="helix" evidence="13">
    <location>
        <begin position="569"/>
        <end position="574"/>
    </location>
</feature>
<feature type="strand" evidence="13">
    <location>
        <begin position="577"/>
        <end position="579"/>
    </location>
</feature>
<feature type="helix" evidence="13">
    <location>
        <begin position="582"/>
        <end position="592"/>
    </location>
</feature>
<feature type="helix" evidence="13">
    <location>
        <begin position="595"/>
        <end position="598"/>
    </location>
</feature>
<feature type="turn" evidence="13">
    <location>
        <begin position="602"/>
        <end position="605"/>
    </location>
</feature>
<feature type="strand" evidence="13">
    <location>
        <begin position="608"/>
        <end position="610"/>
    </location>
</feature>
<feature type="helix" evidence="13">
    <location>
        <begin position="618"/>
        <end position="632"/>
    </location>
</feature>
<feature type="strand" evidence="13">
    <location>
        <begin position="635"/>
        <end position="639"/>
    </location>
</feature>
<feature type="helix" evidence="13">
    <location>
        <begin position="648"/>
        <end position="661"/>
    </location>
</feature>
<feature type="strand" evidence="13">
    <location>
        <begin position="663"/>
        <end position="665"/>
    </location>
</feature>
<feature type="strand" evidence="13">
    <location>
        <begin position="667"/>
        <end position="673"/>
    </location>
</feature>
<feature type="turn" evidence="13">
    <location>
        <begin position="674"/>
        <end position="676"/>
    </location>
</feature>
<feature type="strand" evidence="13">
    <location>
        <begin position="680"/>
        <end position="687"/>
    </location>
</feature>
<feature type="strand" evidence="13">
    <location>
        <begin position="690"/>
        <end position="695"/>
    </location>
</feature>
<feature type="helix" evidence="13">
    <location>
        <begin position="697"/>
        <end position="701"/>
    </location>
</feature>
<feature type="turn" evidence="13">
    <location>
        <begin position="702"/>
        <end position="704"/>
    </location>
</feature>
<feature type="helix" evidence="13">
    <location>
        <begin position="706"/>
        <end position="715"/>
    </location>
</feature>
<dbReference type="EMBL" id="AJ272202">
    <property type="protein sequence ID" value="CAB97048.1"/>
    <property type="molecule type" value="mRNA"/>
</dbReference>
<dbReference type="EMBL" id="AF287699">
    <property type="protein sequence ID" value="AAG09829.1"/>
    <property type="molecule type" value="mRNA"/>
</dbReference>
<dbReference type="EMBL" id="AB019228">
    <property type="protein sequence ID" value="BAA96918.1"/>
    <property type="molecule type" value="Genomic_DNA"/>
</dbReference>
<dbReference type="EMBL" id="CP002688">
    <property type="protein sequence ID" value="AED97027.1"/>
    <property type="molecule type" value="Genomic_DNA"/>
</dbReference>
<dbReference type="EMBL" id="AF360334">
    <property type="protein sequence ID" value="AAK26044.1"/>
    <property type="molecule type" value="mRNA"/>
</dbReference>
<dbReference type="EMBL" id="AY142686">
    <property type="protein sequence ID" value="AAN13224.1"/>
    <property type="molecule type" value="mRNA"/>
</dbReference>
<dbReference type="RefSeq" id="NP_200635.1">
    <property type="nucleotide sequence ID" value="NM_125212.3"/>
</dbReference>
<dbReference type="PDB" id="7N58">
    <property type="method" value="EM"/>
    <property type="resolution" value="3.40 A"/>
    <property type="chains" value="A/B=1-728"/>
</dbReference>
<dbReference type="PDB" id="7N59">
    <property type="method" value="EM"/>
    <property type="resolution" value="3.60 A"/>
    <property type="chains" value="A/B=1-728"/>
</dbReference>
<dbReference type="PDB" id="7N5A">
    <property type="method" value="EM"/>
    <property type="resolution" value="3.95 A"/>
    <property type="chains" value="A/B=1-728"/>
</dbReference>
<dbReference type="PDB" id="7N5B">
    <property type="method" value="EM"/>
    <property type="resolution" value="3.80 A"/>
    <property type="chains" value="A/B=1-728"/>
</dbReference>
<dbReference type="PDBsum" id="7N58"/>
<dbReference type="PDBsum" id="7N59"/>
<dbReference type="PDBsum" id="7N5A"/>
<dbReference type="PDBsum" id="7N5B"/>
<dbReference type="EMDB" id="EMD-24182"/>
<dbReference type="EMDB" id="EMD-24183"/>
<dbReference type="EMDB" id="EMD-24184"/>
<dbReference type="EMDB" id="EMD-24185"/>
<dbReference type="SMR" id="Q9LVM1"/>
<dbReference type="BioGRID" id="21183">
    <property type="interactions" value="7"/>
</dbReference>
<dbReference type="FunCoup" id="Q9LVM1">
    <property type="interactions" value="4115"/>
</dbReference>
<dbReference type="IntAct" id="Q9LVM1">
    <property type="interactions" value="5"/>
</dbReference>
<dbReference type="STRING" id="3702.Q9LVM1"/>
<dbReference type="TCDB" id="3.A.1.210.8">
    <property type="family name" value="the atp-binding cassette (abc) superfamily"/>
</dbReference>
<dbReference type="MetOSite" id="Q9LVM1"/>
<dbReference type="PaxDb" id="3702-AT5G58270.1"/>
<dbReference type="ProteomicsDB" id="244536"/>
<dbReference type="EnsemblPlants" id="AT5G58270.1">
    <property type="protein sequence ID" value="AT5G58270.1"/>
    <property type="gene ID" value="AT5G58270"/>
</dbReference>
<dbReference type="GeneID" id="835939"/>
<dbReference type="Gramene" id="AT5G58270.1">
    <property type="protein sequence ID" value="AT5G58270.1"/>
    <property type="gene ID" value="AT5G58270"/>
</dbReference>
<dbReference type="KEGG" id="ath:AT5G58270"/>
<dbReference type="Araport" id="AT5G58270"/>
<dbReference type="TAIR" id="AT5G58270">
    <property type="gene designation" value="ABCB25"/>
</dbReference>
<dbReference type="eggNOG" id="KOG0057">
    <property type="taxonomic scope" value="Eukaryota"/>
</dbReference>
<dbReference type="HOGENOM" id="CLU_000604_84_1_1"/>
<dbReference type="InParanoid" id="Q9LVM1"/>
<dbReference type="OMA" id="VFHIIPI"/>
<dbReference type="OrthoDB" id="6500128at2759"/>
<dbReference type="PhylomeDB" id="Q9LVM1"/>
<dbReference type="BioCyc" id="ARA:AT5G58270-MONOMER"/>
<dbReference type="UniPathway" id="UPA00344"/>
<dbReference type="PRO" id="PR:Q9LVM1"/>
<dbReference type="Proteomes" id="UP000006548">
    <property type="component" value="Chromosome 5"/>
</dbReference>
<dbReference type="ExpressionAtlas" id="Q9LVM1">
    <property type="expression patterns" value="baseline and differential"/>
</dbReference>
<dbReference type="GO" id="GO:0009507">
    <property type="term" value="C:chloroplast"/>
    <property type="evidence" value="ECO:0007005"/>
    <property type="project" value="TAIR"/>
</dbReference>
<dbReference type="GO" id="GO:0009941">
    <property type="term" value="C:chloroplast envelope"/>
    <property type="evidence" value="ECO:0007005"/>
    <property type="project" value="TAIR"/>
</dbReference>
<dbReference type="GO" id="GO:0005743">
    <property type="term" value="C:mitochondrial inner membrane"/>
    <property type="evidence" value="ECO:0007669"/>
    <property type="project" value="UniProtKB-SubCell"/>
</dbReference>
<dbReference type="GO" id="GO:0005739">
    <property type="term" value="C:mitochondrion"/>
    <property type="evidence" value="ECO:0000314"/>
    <property type="project" value="UniProtKB"/>
</dbReference>
<dbReference type="GO" id="GO:0009536">
    <property type="term" value="C:plastid"/>
    <property type="evidence" value="ECO:0007005"/>
    <property type="project" value="TAIR"/>
</dbReference>
<dbReference type="GO" id="GO:0140359">
    <property type="term" value="F:ABC-type transporter activity"/>
    <property type="evidence" value="ECO:0007669"/>
    <property type="project" value="InterPro"/>
</dbReference>
<dbReference type="GO" id="GO:0005524">
    <property type="term" value="F:ATP binding"/>
    <property type="evidence" value="ECO:0007669"/>
    <property type="project" value="UniProtKB-KW"/>
</dbReference>
<dbReference type="GO" id="GO:0016887">
    <property type="term" value="F:ATP hydrolysis activity"/>
    <property type="evidence" value="ECO:0007669"/>
    <property type="project" value="InterPro"/>
</dbReference>
<dbReference type="GO" id="GO:0009658">
    <property type="term" value="P:chloroplast organization"/>
    <property type="evidence" value="ECO:0000315"/>
    <property type="project" value="TAIR"/>
</dbReference>
<dbReference type="GO" id="GO:0051276">
    <property type="term" value="P:chromosome organization"/>
    <property type="evidence" value="ECO:0000315"/>
    <property type="project" value="TAIR"/>
</dbReference>
<dbReference type="GO" id="GO:0006879">
    <property type="term" value="P:intracellular iron ion homeostasis"/>
    <property type="evidence" value="ECO:0000315"/>
    <property type="project" value="UniProtKB"/>
</dbReference>
<dbReference type="GO" id="GO:0006826">
    <property type="term" value="P:iron ion transport"/>
    <property type="evidence" value="ECO:0007669"/>
    <property type="project" value="UniProtKB-KW"/>
</dbReference>
<dbReference type="GO" id="GO:0006777">
    <property type="term" value="P:Mo-molybdopterin cofactor biosynthetic process"/>
    <property type="evidence" value="ECO:0000315"/>
    <property type="project" value="TAIR"/>
</dbReference>
<dbReference type="GO" id="GO:0009555">
    <property type="term" value="P:pollen development"/>
    <property type="evidence" value="ECO:0000315"/>
    <property type="project" value="TAIR"/>
</dbReference>
<dbReference type="GO" id="GO:0050790">
    <property type="term" value="P:regulation of catalytic activity"/>
    <property type="evidence" value="ECO:0000315"/>
    <property type="project" value="TAIR"/>
</dbReference>
<dbReference type="GO" id="GO:0010380">
    <property type="term" value="P:regulation of chlorophyll biosynthetic process"/>
    <property type="evidence" value="ECO:0000315"/>
    <property type="project" value="TAIR"/>
</dbReference>
<dbReference type="GO" id="GO:0046686">
    <property type="term" value="P:response to cadmium ion"/>
    <property type="evidence" value="ECO:0000315"/>
    <property type="project" value="TAIR"/>
</dbReference>
<dbReference type="GO" id="GO:0010288">
    <property type="term" value="P:response to lead ion"/>
    <property type="evidence" value="ECO:0000315"/>
    <property type="project" value="TAIR"/>
</dbReference>
<dbReference type="GO" id="GO:0048364">
    <property type="term" value="P:root development"/>
    <property type="evidence" value="ECO:0000315"/>
    <property type="project" value="TAIR"/>
</dbReference>
<dbReference type="CDD" id="cd18582">
    <property type="entry name" value="ABC_6TM_ATM1_ABCB7"/>
    <property type="match status" value="1"/>
</dbReference>
<dbReference type="CDD" id="cd03253">
    <property type="entry name" value="ABCC_ATM1_transporter"/>
    <property type="match status" value="1"/>
</dbReference>
<dbReference type="FunFam" id="3.40.50.300:FF:001038">
    <property type="entry name" value="ABC transporter B family member 25"/>
    <property type="match status" value="1"/>
</dbReference>
<dbReference type="FunFam" id="1.20.1560.10:FF:000004">
    <property type="entry name" value="ATP-binding cassette sub-family B member 7"/>
    <property type="match status" value="1"/>
</dbReference>
<dbReference type="Gene3D" id="1.20.1560.10">
    <property type="entry name" value="ABC transporter type 1, transmembrane domain"/>
    <property type="match status" value="1"/>
</dbReference>
<dbReference type="Gene3D" id="3.40.50.300">
    <property type="entry name" value="P-loop containing nucleotide triphosphate hydrolases"/>
    <property type="match status" value="1"/>
</dbReference>
<dbReference type="InterPro" id="IPR003593">
    <property type="entry name" value="AAA+_ATPase"/>
</dbReference>
<dbReference type="InterPro" id="IPR011527">
    <property type="entry name" value="ABC1_TM_dom"/>
</dbReference>
<dbReference type="InterPro" id="IPR036640">
    <property type="entry name" value="ABC1_TM_sf"/>
</dbReference>
<dbReference type="InterPro" id="IPR003439">
    <property type="entry name" value="ABC_transporter-like_ATP-bd"/>
</dbReference>
<dbReference type="InterPro" id="IPR017871">
    <property type="entry name" value="ABC_transporter-like_CS"/>
</dbReference>
<dbReference type="InterPro" id="IPR027417">
    <property type="entry name" value="P-loop_NTPase"/>
</dbReference>
<dbReference type="InterPro" id="IPR039421">
    <property type="entry name" value="Type_1_exporter"/>
</dbReference>
<dbReference type="PANTHER" id="PTHR24221">
    <property type="entry name" value="ATP-BINDING CASSETTE SUB-FAMILY B"/>
    <property type="match status" value="1"/>
</dbReference>
<dbReference type="PANTHER" id="PTHR24221:SF402">
    <property type="entry name" value="IRON-SULFUR CLUSTERS TRANSPORTER ABCB7, MITOCHONDRIAL"/>
    <property type="match status" value="1"/>
</dbReference>
<dbReference type="Pfam" id="PF00664">
    <property type="entry name" value="ABC_membrane"/>
    <property type="match status" value="1"/>
</dbReference>
<dbReference type="Pfam" id="PF00005">
    <property type="entry name" value="ABC_tran"/>
    <property type="match status" value="1"/>
</dbReference>
<dbReference type="SMART" id="SM00382">
    <property type="entry name" value="AAA"/>
    <property type="match status" value="1"/>
</dbReference>
<dbReference type="SUPFAM" id="SSF90123">
    <property type="entry name" value="ABC transporter transmembrane region"/>
    <property type="match status" value="1"/>
</dbReference>
<dbReference type="SUPFAM" id="SSF52540">
    <property type="entry name" value="P-loop containing nucleoside triphosphate hydrolases"/>
    <property type="match status" value="1"/>
</dbReference>
<dbReference type="PROSITE" id="PS50929">
    <property type="entry name" value="ABC_TM1F"/>
    <property type="match status" value="1"/>
</dbReference>
<dbReference type="PROSITE" id="PS00211">
    <property type="entry name" value="ABC_TRANSPORTER_1"/>
    <property type="match status" value="1"/>
</dbReference>
<dbReference type="PROSITE" id="PS50893">
    <property type="entry name" value="ABC_TRANSPORTER_2"/>
    <property type="match status" value="1"/>
</dbReference>
<protein>
    <recommendedName>
        <fullName>ABC transporter B family member 25, mitochondrial</fullName>
        <shortName>ABC transporter ABCB.25</shortName>
        <shortName>AtABCB25</shortName>
    </recommendedName>
    <alternativeName>
        <fullName>ABC transporter of the mitochondrion 3</fullName>
        <shortName>AtATM3</shortName>
        <shortName>Iron-sulfur clusters transporter ATM3</shortName>
    </alternativeName>
    <alternativeName>
        <fullName>Protein STARIK 1</fullName>
    </alternativeName>
</protein>
<gene>
    <name type="primary">ABCB25</name>
    <name type="synonym">ATM3</name>
    <name type="synonym">STA1</name>
    <name type="ordered locus">At5g58270</name>
    <name type="ORF">MCK7.14</name>
</gene>
<reference key="1">
    <citation type="journal article" date="2001" name="Plant Cell">
        <title>A mutation of the mitochondrial ABC transporter Sta1 leads to dwarfism and chlorosis in the Arabidopsis mutant starik.</title>
        <authorList>
            <person name="Kushnir S."/>
            <person name="Babiychuk E."/>
            <person name="Storozhenko S."/>
            <person name="Davey M.W."/>
            <person name="Papenbrock J."/>
            <person name="De Rycke R."/>
            <person name="Engler G."/>
            <person name="Stephan U.W."/>
            <person name="Lange H."/>
            <person name="Kispal G."/>
            <person name="Lill R."/>
            <person name="Van Montagu M."/>
        </authorList>
    </citation>
    <scope>NUCLEOTIDE SEQUENCE [MRNA]</scope>
    <scope>FUNCTION</scope>
    <scope>DISRUPTION PHENOTYPE</scope>
    <scope>SUBCELLULAR LOCATION</scope>
</reference>
<reference key="2">
    <citation type="journal article" date="2007" name="J. Biol. Chem.">
        <title>Functional characterization of AtATM1, AtATM2, and AtATM3, a subfamily of Arabidopsis half-molecule ATP-binding cassette transporters implicated in iron homeostasis.</title>
        <authorList>
            <person name="Chen S."/>
            <person name="Sanchez-Fernandez R."/>
            <person name="Lyver E.R."/>
            <person name="Dancis A."/>
            <person name="Rea P.A."/>
        </authorList>
    </citation>
    <scope>NUCLEOTIDE SEQUENCE [MRNA]</scope>
    <scope>FUNCTION</scope>
    <scope>TISSUE SPECIFICITY</scope>
    <scope>SUBCELLULAR LOCATION</scope>
    <source>
        <strain>cv. Columbia</strain>
    </source>
</reference>
<reference key="3">
    <citation type="journal article" date="2000" name="DNA Res.">
        <title>Structural analysis of Arabidopsis thaliana chromosome 5. X. Sequence features of the regions of 3,076,755 bp covered by sixty P1 and TAC clones.</title>
        <authorList>
            <person name="Sato S."/>
            <person name="Nakamura Y."/>
            <person name="Kaneko T."/>
            <person name="Katoh T."/>
            <person name="Asamizu E."/>
            <person name="Kotani H."/>
            <person name="Tabata S."/>
        </authorList>
    </citation>
    <scope>NUCLEOTIDE SEQUENCE [LARGE SCALE GENOMIC DNA]</scope>
    <source>
        <strain>cv. Columbia</strain>
    </source>
</reference>
<reference key="4">
    <citation type="journal article" date="2017" name="Plant J.">
        <title>Araport11: a complete reannotation of the Arabidopsis thaliana reference genome.</title>
        <authorList>
            <person name="Cheng C.Y."/>
            <person name="Krishnakumar V."/>
            <person name="Chan A.P."/>
            <person name="Thibaud-Nissen F."/>
            <person name="Schobel S."/>
            <person name="Town C.D."/>
        </authorList>
    </citation>
    <scope>GENOME REANNOTATION</scope>
    <source>
        <strain>cv. Columbia</strain>
    </source>
</reference>
<reference key="5">
    <citation type="journal article" date="2003" name="Science">
        <title>Empirical analysis of transcriptional activity in the Arabidopsis genome.</title>
        <authorList>
            <person name="Yamada K."/>
            <person name="Lim J."/>
            <person name="Dale J.M."/>
            <person name="Chen H."/>
            <person name="Shinn P."/>
            <person name="Palm C.J."/>
            <person name="Southwick A.M."/>
            <person name="Wu H.C."/>
            <person name="Kim C.J."/>
            <person name="Nguyen M."/>
            <person name="Pham P.K."/>
            <person name="Cheuk R.F."/>
            <person name="Karlin-Newmann G."/>
            <person name="Liu S.X."/>
            <person name="Lam B."/>
            <person name="Sakano H."/>
            <person name="Wu T."/>
            <person name="Yu G."/>
            <person name="Miranda M."/>
            <person name="Quach H.L."/>
            <person name="Tripp M."/>
            <person name="Chang C.H."/>
            <person name="Lee J.M."/>
            <person name="Toriumi M.J."/>
            <person name="Chan M.M."/>
            <person name="Tang C.C."/>
            <person name="Onodera C.S."/>
            <person name="Deng J.M."/>
            <person name="Akiyama K."/>
            <person name="Ansari Y."/>
            <person name="Arakawa T."/>
            <person name="Banh J."/>
            <person name="Banno F."/>
            <person name="Bowser L."/>
            <person name="Brooks S.Y."/>
            <person name="Carninci P."/>
            <person name="Chao Q."/>
            <person name="Choy N."/>
            <person name="Enju A."/>
            <person name="Goldsmith A.D."/>
            <person name="Gurjal M."/>
            <person name="Hansen N.F."/>
            <person name="Hayashizaki Y."/>
            <person name="Johnson-Hopson C."/>
            <person name="Hsuan V.W."/>
            <person name="Iida K."/>
            <person name="Karnes M."/>
            <person name="Khan S."/>
            <person name="Koesema E."/>
            <person name="Ishida J."/>
            <person name="Jiang P.X."/>
            <person name="Jones T."/>
            <person name="Kawai J."/>
            <person name="Kamiya A."/>
            <person name="Meyers C."/>
            <person name="Nakajima M."/>
            <person name="Narusaka M."/>
            <person name="Seki M."/>
            <person name="Sakurai T."/>
            <person name="Satou M."/>
            <person name="Tamse R."/>
            <person name="Vaysberg M."/>
            <person name="Wallender E.K."/>
            <person name="Wong C."/>
            <person name="Yamamura Y."/>
            <person name="Yuan S."/>
            <person name="Shinozaki K."/>
            <person name="Davis R.W."/>
            <person name="Theologis A."/>
            <person name="Ecker J.R."/>
        </authorList>
    </citation>
    <scope>NUCLEOTIDE SEQUENCE [LARGE SCALE MRNA]</scope>
    <source>
        <strain>cv. Columbia</strain>
    </source>
</reference>
<reference key="6">
    <citation type="journal article" date="2001" name="J. Biol. Chem.">
        <title>The Arabidopsis thaliana ABC protein superfamily, a complete inventory.</title>
        <authorList>
            <person name="Sanchez-Fernandez R."/>
            <person name="Davies T.G."/>
            <person name="Coleman J.O."/>
            <person name="Rea P.A."/>
        </authorList>
    </citation>
    <scope>GENE FAMILY</scope>
    <scope>NOMENCLATURE</scope>
</reference>
<reference key="7">
    <citation type="journal article" date="2002" name="Planta">
        <title>Multifunctionality of plant ABC transporters -- more than just detoxifiers.</title>
        <authorList>
            <person name="Martinoia E."/>
            <person name="Klein M."/>
            <person name="Geisler M."/>
            <person name="Bovet L."/>
            <person name="Forestier C."/>
            <person name="Kolukisaoglu H.U."/>
            <person name="Mueller-Roeber B."/>
            <person name="Schulz B."/>
        </authorList>
    </citation>
    <scope>GENE FAMILY</scope>
</reference>
<reference key="8">
    <citation type="journal article" date="2004" name="Plant Cell">
        <title>Experimental analysis of the Arabidopsis mitochondrial proteome highlights signaling and regulatory components, provides assessment of targeting prediction programs, and indicates plant-specific mitochondrial proteins.</title>
        <authorList>
            <person name="Heazlewood J.L."/>
            <person name="Tonti-Filippini J.S."/>
            <person name="Gout A.M."/>
            <person name="Day D.A."/>
            <person name="Whelan J."/>
            <person name="Millar A.H."/>
        </authorList>
    </citation>
    <scope>IDENTIFICATION BY MASS SPECTROMETRY</scope>
    <scope>SUBCELLULAR LOCATION [LARGE SCALE ANALYSIS]</scope>
    <source>
        <strain>cv. Landsberg erecta</strain>
    </source>
</reference>
<reference key="9">
    <citation type="journal article" date="2006" name="Plant Physiol.">
        <title>AtATM3 is involved in heavy metal resistance in Arabidopsis.</title>
        <authorList>
            <person name="Kim D.-Y."/>
            <person name="Bovet L."/>
            <person name="Kushnir S."/>
            <person name="Noh E.W."/>
            <person name="Martinoia E."/>
            <person name="Lee Y."/>
        </authorList>
    </citation>
    <scope>FUNCTION</scope>
    <scope>DISRUPTION PHENOTYPE</scope>
    <scope>INDUCTION BY CADMIUM AND LEAD</scope>
</reference>
<reference key="10">
    <citation type="journal article" date="2008" name="Trends Plant Sci.">
        <title>Plant ABC proteins - a unified nomenclature and updated inventory.</title>
        <authorList>
            <person name="Verrier P.J."/>
            <person name="Bird D."/>
            <person name="Burla B."/>
            <person name="Dassa E."/>
            <person name="Forestier C."/>
            <person name="Geisler M."/>
            <person name="Klein M."/>
            <person name="Kolukisaoglu H.U."/>
            <person name="Lee Y."/>
            <person name="Martinoia E."/>
            <person name="Murphy A."/>
            <person name="Rea P.A."/>
            <person name="Samuels L."/>
            <person name="Schulz B."/>
            <person name="Spalding E.J."/>
            <person name="Yazaki K."/>
            <person name="Theodoulou F.L."/>
        </authorList>
    </citation>
    <scope>GENE FAMILY</scope>
    <scope>NOMENCLATURE</scope>
</reference>
<reference key="11">
    <citation type="journal article" date="2009" name="Plant Physiol.">
        <title>An allelic mutant series of ATM3 reveals its key role in the biogenesis of cytosolic iron-sulfur proteins in Arabidopsis.</title>
        <authorList>
            <person name="Bernard D.G."/>
            <person name="Cheng Y."/>
            <person name="Zhao Y."/>
            <person name="Balk J."/>
        </authorList>
    </citation>
    <scope>FUNCTION</scope>
    <scope>DISRUPTION PHENOTYPE</scope>
    <scope>MUTAGENESIS OF ARG-612</scope>
</reference>
<reference key="12">
    <citation type="journal article" date="2010" name="Plant Cell">
        <title>A novel role for Arabidopsis mitochondrial ABC transporter ATM3 in molybdenum cofactor biosynthesis.</title>
        <authorList>
            <person name="Teschner J."/>
            <person name="Lachmann N."/>
            <person name="Schulze J."/>
            <person name="Geisler M."/>
            <person name="Selbach K."/>
            <person name="Santamaria-Araujo J."/>
            <person name="Balk J."/>
            <person name="Mendel R.R."/>
            <person name="Bittner F."/>
        </authorList>
    </citation>
    <scope>FUNCTION</scope>
    <scope>DISRUPTION PHENOTYPE</scope>
</reference>
<keyword id="KW-0002">3D-structure</keyword>
<keyword id="KW-0067">ATP-binding</keyword>
<keyword id="KW-0406">Ion transport</keyword>
<keyword id="KW-0408">Iron</keyword>
<keyword id="KW-0410">Iron transport</keyword>
<keyword id="KW-0472">Membrane</keyword>
<keyword id="KW-0496">Mitochondrion</keyword>
<keyword id="KW-0999">Mitochondrion inner membrane</keyword>
<keyword id="KW-0547">Nucleotide-binding</keyword>
<keyword id="KW-1185">Reference proteome</keyword>
<keyword id="KW-0809">Transit peptide</keyword>
<keyword id="KW-0812">Transmembrane</keyword>
<keyword id="KW-1133">Transmembrane helix</keyword>
<keyword id="KW-0813">Transport</keyword>